<organism>
    <name type="scientific">Rattus norvegicus</name>
    <name type="common">Rat</name>
    <dbReference type="NCBI Taxonomy" id="10116"/>
    <lineage>
        <taxon>Eukaryota</taxon>
        <taxon>Metazoa</taxon>
        <taxon>Chordata</taxon>
        <taxon>Craniata</taxon>
        <taxon>Vertebrata</taxon>
        <taxon>Euteleostomi</taxon>
        <taxon>Mammalia</taxon>
        <taxon>Eutheria</taxon>
        <taxon>Euarchontoglires</taxon>
        <taxon>Glires</taxon>
        <taxon>Rodentia</taxon>
        <taxon>Myomorpha</taxon>
        <taxon>Muroidea</taxon>
        <taxon>Muridae</taxon>
        <taxon>Murinae</taxon>
        <taxon>Rattus</taxon>
    </lineage>
</organism>
<feature type="signal peptide" evidence="4">
    <location>
        <begin position="1"/>
        <end position="23"/>
    </location>
</feature>
<feature type="chain" id="PRO_0000015130" description="Cell surface glycoprotein CD200 receptor 1">
    <location>
        <begin position="24"/>
        <end position="327"/>
    </location>
</feature>
<feature type="topological domain" description="Extracellular" evidence="2">
    <location>
        <begin position="24"/>
        <end position="239"/>
    </location>
</feature>
<feature type="transmembrane region" description="Helical" evidence="2">
    <location>
        <begin position="240"/>
        <end position="260"/>
    </location>
</feature>
<feature type="topological domain" description="Cytoplasmic" evidence="2">
    <location>
        <begin position="261"/>
        <end position="327"/>
    </location>
</feature>
<feature type="domain" description="Ig-like V-type">
    <location>
        <begin position="26"/>
        <end position="145"/>
    </location>
</feature>
<feature type="domain" description="Ig-like C2-type">
    <location>
        <begin position="147"/>
        <end position="226"/>
    </location>
</feature>
<feature type="glycosylation site" description="N-linked (GlcNAc...) asparagine">
    <location>
        <position position="29"/>
    </location>
</feature>
<feature type="glycosylation site" description="N-linked (GlcNAc...) asparagine">
    <location>
        <position position="34"/>
    </location>
</feature>
<feature type="glycosylation site" description="N-linked (GlcNAc...) asparagine" evidence="2">
    <location>
        <position position="43"/>
    </location>
</feature>
<feature type="glycosylation site" description="N-linked (GlcNAc...) asparagine" evidence="2">
    <location>
        <position position="96"/>
    </location>
</feature>
<feature type="glycosylation site" description="N-linked (GlcNAc...) asparagine" evidence="2">
    <location>
        <position position="159"/>
    </location>
</feature>
<feature type="glycosylation site" description="N-linked (GlcNAc...) asparagine" evidence="2">
    <location>
        <position position="187"/>
    </location>
</feature>
<feature type="glycosylation site" description="N-linked (GlcNAc...) asparagine" evidence="2">
    <location>
        <position position="192"/>
    </location>
</feature>
<feature type="glycosylation site" description="N-linked (GlcNAc...) asparagine" evidence="2">
    <location>
        <position position="222"/>
    </location>
</feature>
<feature type="disulfide bond" evidence="3">
    <location>
        <begin position="58"/>
        <end position="129"/>
    </location>
</feature>
<feature type="disulfide bond" evidence="3">
    <location>
        <begin position="81"/>
        <end position="97"/>
    </location>
</feature>
<feature type="disulfide bond" evidence="3">
    <location>
        <begin position="164"/>
        <end position="213"/>
    </location>
</feature>
<feature type="disulfide bond" evidence="3">
    <location>
        <begin position="183"/>
        <end position="201"/>
    </location>
</feature>
<feature type="splice variant" id="VSP_034998" description="In isoform 2." evidence="5">
    <original>VP</original>
    <variation>GK</variation>
    <location>
        <begin position="148"/>
        <end position="149"/>
    </location>
</feature>
<feature type="splice variant" id="VSP_034999" description="In isoform 2." evidence="5">
    <location>
        <begin position="150"/>
        <end position="327"/>
    </location>
</feature>
<name>MO2R1_RAT</name>
<proteinExistence type="evidence at protein level"/>
<gene>
    <name type="primary">Cd200r1</name>
    <name type="synonym">Mox2r</name>
    <name type="synonym">Ox2r</name>
</gene>
<evidence type="ECO:0000250" key="1"/>
<evidence type="ECO:0000255" key="2"/>
<evidence type="ECO:0000255" key="3">
    <source>
        <dbReference type="PROSITE-ProRule" id="PRU00114"/>
    </source>
</evidence>
<evidence type="ECO:0000269" key="4">
    <source>
    </source>
</evidence>
<evidence type="ECO:0000303" key="5">
    <source ref="2"/>
</evidence>
<evidence type="ECO:0000305" key="6"/>
<sequence length="327" mass="35534">MLCFWRTSHVAVLLIWGVFAAESSCPDKNQTMQNNSSTMTEVNTTVFVQMGKKALLCCPSISLTKVILITWTITLRGQPSCIISYKADTRETHESNCSDRSITWASTPDLAPDLQISAVALQHEGRYSCDIAVPDGNFQNIYDLQVLVPPEVTHFPGENRTAVCEAIAGKPAAQISWTPDGDCVAKNESHSNGTVTVRSTCHWEQSHVSVVFCVVSHLTTGNQSLSIELGRGGDQLLGSYIQYIIPSIIILIIIGCICLLKISGCRKCKLPKSGATPDIEEDEMQPYASYTEKSNPLYDTVTTTEAHPASQGKVNGTDCLTLSAMGI</sequence>
<comment type="function">
    <text evidence="1">Inhibitory receptor for the CD200/OX2 cell surface glycoprotein. Limits inflammation by inhibiting the expression of pro-inflammatory molecules including TNF-alpha, interferons, and inducible nitric oxide synthase (iNOS) in response to selected stimuli (By similarity).</text>
</comment>
<comment type="subunit">
    <text evidence="1">CD200 and CD200R1 interact via their respective N-terminal Ig-like domains.</text>
</comment>
<comment type="subcellular location">
    <subcellularLocation>
        <location>Cell membrane</location>
        <topology>Single-pass type I membrane protein</topology>
    </subcellularLocation>
</comment>
<comment type="alternative products">
    <event type="alternative splicing"/>
    <isoform>
        <id>Q9ES58-1</id>
        <name>1</name>
        <sequence type="displayed"/>
    </isoform>
    <isoform>
        <id>Q9ES58-2</id>
        <name>2</name>
        <sequence type="described" ref="VSP_034998 VSP_034999"/>
    </isoform>
</comment>
<comment type="tissue specificity">
    <text evidence="4">Restricted to cells of the myeloid lineage.</text>
</comment>
<comment type="PTM">
    <text>Phosphorylated on tyrosine residues.</text>
</comment>
<comment type="PTM">
    <text>Highly N-glycosylated.</text>
</comment>
<comment type="similarity">
    <text evidence="6">Belongs to the CD200R family.</text>
</comment>
<keyword id="KW-0025">Alternative splicing</keyword>
<keyword id="KW-1003">Cell membrane</keyword>
<keyword id="KW-0903">Direct protein sequencing</keyword>
<keyword id="KW-1015">Disulfide bond</keyword>
<keyword id="KW-0325">Glycoprotein</keyword>
<keyword id="KW-0472">Membrane</keyword>
<keyword id="KW-0597">Phosphoprotein</keyword>
<keyword id="KW-0675">Receptor</keyword>
<keyword id="KW-1185">Reference proteome</keyword>
<keyword id="KW-0732">Signal</keyword>
<keyword id="KW-0812">Transmembrane</keyword>
<keyword id="KW-1133">Transmembrane helix</keyword>
<accession>Q9ES58</accession>
<accession>Q6PS97</accession>
<dbReference type="EMBL" id="AF231392">
    <property type="protein sequence ID" value="AAF98555.1"/>
    <property type="molecule type" value="Genomic_DNA"/>
</dbReference>
<dbReference type="EMBL" id="AY583211">
    <property type="protein sequence ID" value="AAS90843.1"/>
    <property type="molecule type" value="mRNA"/>
</dbReference>
<dbReference type="RefSeq" id="NP_076443.1">
    <molecule id="Q9ES58-1"/>
    <property type="nucleotide sequence ID" value="NM_023953.2"/>
</dbReference>
<dbReference type="SMR" id="Q9ES58"/>
<dbReference type="BioGRID" id="249042">
    <property type="interactions" value="1"/>
</dbReference>
<dbReference type="FunCoup" id="Q9ES58">
    <property type="interactions" value="22"/>
</dbReference>
<dbReference type="STRING" id="10116.ENSRNOP00000002799"/>
<dbReference type="GlyCosmos" id="Q9ES58">
    <property type="glycosylation" value="8 sites, No reported glycans"/>
</dbReference>
<dbReference type="GlyGen" id="Q9ES58">
    <property type="glycosylation" value="8 sites"/>
</dbReference>
<dbReference type="PhosphoSitePlus" id="Q9ES58"/>
<dbReference type="PaxDb" id="10116-ENSRNOP00000002799"/>
<dbReference type="Ensembl" id="ENSRNOT00000002799.6">
    <molecule id="Q9ES58-1"/>
    <property type="protein sequence ID" value="ENSRNOP00000002799.3"/>
    <property type="gene ID" value="ENSRNOG00000039048.3"/>
</dbReference>
<dbReference type="GeneID" id="64357"/>
<dbReference type="KEGG" id="rno:64357"/>
<dbReference type="UCSC" id="RGD:61837">
    <molecule id="Q9ES58-1"/>
    <property type="organism name" value="rat"/>
</dbReference>
<dbReference type="AGR" id="RGD:61837"/>
<dbReference type="CTD" id="131450"/>
<dbReference type="RGD" id="61837">
    <property type="gene designation" value="Cd200r1"/>
</dbReference>
<dbReference type="eggNOG" id="ENOG502S9IV">
    <property type="taxonomic scope" value="Eukaryota"/>
</dbReference>
<dbReference type="GeneTree" id="ENSGT00390000014496"/>
<dbReference type="HOGENOM" id="CLU_069156_0_0_1"/>
<dbReference type="InParanoid" id="Q9ES58"/>
<dbReference type="OMA" id="MKAGTNM"/>
<dbReference type="OrthoDB" id="8915654at2759"/>
<dbReference type="PhylomeDB" id="Q9ES58"/>
<dbReference type="TreeFam" id="TF335960"/>
<dbReference type="PRO" id="PR:Q9ES58"/>
<dbReference type="Proteomes" id="UP000002494">
    <property type="component" value="Chromosome 11"/>
</dbReference>
<dbReference type="Bgee" id="ENSRNOG00000039048">
    <property type="expression patterns" value="Expressed in spleen and 17 other cell types or tissues"/>
</dbReference>
<dbReference type="GO" id="GO:0009986">
    <property type="term" value="C:cell surface"/>
    <property type="evidence" value="ECO:0000314"/>
    <property type="project" value="ARUK-UCL"/>
</dbReference>
<dbReference type="GO" id="GO:0009897">
    <property type="term" value="C:external side of plasma membrane"/>
    <property type="evidence" value="ECO:0000266"/>
    <property type="project" value="RGD"/>
</dbReference>
<dbReference type="GO" id="GO:0043235">
    <property type="term" value="C:receptor complex"/>
    <property type="evidence" value="ECO:0000266"/>
    <property type="project" value="RGD"/>
</dbReference>
<dbReference type="GO" id="GO:0086080">
    <property type="term" value="F:protein binding involved in heterotypic cell-cell adhesion"/>
    <property type="evidence" value="ECO:0000353"/>
    <property type="project" value="ARUK-UCL"/>
</dbReference>
<dbReference type="GO" id="GO:0038023">
    <property type="term" value="F:signaling receptor activity"/>
    <property type="evidence" value="ECO:0000266"/>
    <property type="project" value="RGD"/>
</dbReference>
<dbReference type="GO" id="GO:0034113">
    <property type="term" value="P:heterotypic cell-cell adhesion"/>
    <property type="evidence" value="ECO:0000315"/>
    <property type="project" value="ARUK-UCL"/>
</dbReference>
<dbReference type="GO" id="GO:0032715">
    <property type="term" value="P:negative regulation of interleukin-6 production"/>
    <property type="evidence" value="ECO:0000316"/>
    <property type="project" value="ARUK-UCL"/>
</dbReference>
<dbReference type="GO" id="GO:1905522">
    <property type="term" value="P:negative regulation of macrophage migration"/>
    <property type="evidence" value="ECO:0000316"/>
    <property type="project" value="ARUK-UCL"/>
</dbReference>
<dbReference type="GO" id="GO:0150079">
    <property type="term" value="P:negative regulation of neuroinflammatory response"/>
    <property type="evidence" value="ECO:0000316"/>
    <property type="project" value="ARUK-UCL"/>
</dbReference>
<dbReference type="GO" id="GO:2000405">
    <property type="term" value="P:negative regulation of T cell migration"/>
    <property type="evidence" value="ECO:0000316"/>
    <property type="project" value="ARUK-UCL"/>
</dbReference>
<dbReference type="GO" id="GO:0150077">
    <property type="term" value="P:regulation of neuroinflammatory response"/>
    <property type="evidence" value="ECO:0000316"/>
    <property type="project" value="ARUK-UCL"/>
</dbReference>
<dbReference type="CDD" id="cd20985">
    <property type="entry name" value="IgV_CD200R-like"/>
    <property type="match status" value="1"/>
</dbReference>
<dbReference type="FunFam" id="2.60.40.10:FF:000584">
    <property type="entry name" value="Cell surface glycoprotein CD200 receptor 1"/>
    <property type="match status" value="1"/>
</dbReference>
<dbReference type="FunFam" id="2.60.40.10:FF:000769">
    <property type="entry name" value="Cell surface glycoprotein CD200 receptor 1"/>
    <property type="match status" value="1"/>
</dbReference>
<dbReference type="Gene3D" id="2.60.40.10">
    <property type="entry name" value="Immunoglobulins"/>
    <property type="match status" value="2"/>
</dbReference>
<dbReference type="InterPro" id="IPR040012">
    <property type="entry name" value="CD200R"/>
</dbReference>
<dbReference type="InterPro" id="IPR013162">
    <property type="entry name" value="CD80_C2-set"/>
</dbReference>
<dbReference type="InterPro" id="IPR007110">
    <property type="entry name" value="Ig-like_dom"/>
</dbReference>
<dbReference type="InterPro" id="IPR036179">
    <property type="entry name" value="Ig-like_dom_sf"/>
</dbReference>
<dbReference type="InterPro" id="IPR013783">
    <property type="entry name" value="Ig-like_fold"/>
</dbReference>
<dbReference type="InterPro" id="IPR013106">
    <property type="entry name" value="Ig_V-set"/>
</dbReference>
<dbReference type="PANTHER" id="PTHR21462:SF2">
    <property type="entry name" value="CELL SURFACE GLYCOPROTEIN CD200 RECEPTOR 2"/>
    <property type="match status" value="1"/>
</dbReference>
<dbReference type="PANTHER" id="PTHR21462">
    <property type="entry name" value="CELL SURFACE GLYCOPROTEIN OX2 RECEPTOR PRECURSOR"/>
    <property type="match status" value="1"/>
</dbReference>
<dbReference type="Pfam" id="PF08205">
    <property type="entry name" value="C2-set_2"/>
    <property type="match status" value="1"/>
</dbReference>
<dbReference type="Pfam" id="PF07686">
    <property type="entry name" value="V-set"/>
    <property type="match status" value="1"/>
</dbReference>
<dbReference type="SUPFAM" id="SSF48726">
    <property type="entry name" value="Immunoglobulin"/>
    <property type="match status" value="2"/>
</dbReference>
<dbReference type="PROSITE" id="PS50835">
    <property type="entry name" value="IG_LIKE"/>
    <property type="match status" value="2"/>
</dbReference>
<protein>
    <recommendedName>
        <fullName>Cell surface glycoprotein CD200 receptor 1</fullName>
    </recommendedName>
    <alternativeName>
        <fullName>CD200 cell surface glycoprotein receptor</fullName>
    </alternativeName>
    <alternativeName>
        <fullName>Cell surface glycoprotein OX2 receptor 1</fullName>
    </alternativeName>
    <alternativeName>
        <fullName>OX102 antigen</fullName>
    </alternativeName>
</protein>
<reference key="1">
    <citation type="journal article" date="2000" name="Immunity">
        <title>Lymphoid/neuronal cell surface OX2 glycoprotein recognizes a novel receptor on macrophages implicated in the control of their function.</title>
        <authorList>
            <person name="Wright G.J."/>
            <person name="Puklavec M.J."/>
            <person name="Willis A.C."/>
            <person name="Hoek R.M."/>
            <person name="Sedgwick J.D."/>
            <person name="Brown M.H."/>
            <person name="Barclay A.N."/>
        </authorList>
    </citation>
    <scope>NUCLEOTIDE SEQUENCE [GENOMIC DNA]</scope>
    <scope>PROTEIN SEQUENCE OF 24-42</scope>
    <scope>CHARACTERIZATION</scope>
    <scope>TISSUE SPECIFICITY</scope>
    <source>
        <strain>PVG</strain>
    </source>
</reference>
<reference key="2">
    <citation type="submission" date="2004-03" db="EMBL/GenBank/DDBJ databases">
        <title>Ox2 receptor precursor transcript variant 1.</title>
        <authorList>
            <person name="Suarez A."/>
        </authorList>
    </citation>
    <scope>NUCLEOTIDE SEQUENCE [MRNA] (ISOFORM 2)</scope>
</reference>